<protein>
    <recommendedName>
        <fullName evidence="1">Dual-specificity RNA methyltransferase RlmN</fullName>
        <ecNumber evidence="1">2.1.1.192</ecNumber>
    </recommendedName>
    <alternativeName>
        <fullName evidence="1">23S rRNA (adenine(2503)-C(2))-methyltransferase</fullName>
    </alternativeName>
    <alternativeName>
        <fullName evidence="1">23S rRNA m2A2503 methyltransferase</fullName>
    </alternativeName>
    <alternativeName>
        <fullName evidence="1">Ribosomal RNA large subunit methyltransferase N</fullName>
    </alternativeName>
    <alternativeName>
        <fullName evidence="1">tRNA (adenine(37)-C(2))-methyltransferase</fullName>
    </alternativeName>
    <alternativeName>
        <fullName evidence="1">tRNA m2A37 methyltransferase</fullName>
    </alternativeName>
</protein>
<comment type="function">
    <text evidence="1">Specifically methylates position 2 of adenine 2503 in 23S rRNA and position 2 of adenine 37 in tRNAs. m2A2503 modification seems to play a crucial role in the proofreading step occurring at the peptidyl transferase center and thus would serve to optimize ribosomal fidelity.</text>
</comment>
<comment type="catalytic activity">
    <reaction evidence="1">
        <text>adenosine(2503) in 23S rRNA + 2 reduced [2Fe-2S]-[ferredoxin] + 2 S-adenosyl-L-methionine = 2-methyladenosine(2503) in 23S rRNA + 5'-deoxyadenosine + L-methionine + 2 oxidized [2Fe-2S]-[ferredoxin] + S-adenosyl-L-homocysteine</text>
        <dbReference type="Rhea" id="RHEA:42916"/>
        <dbReference type="Rhea" id="RHEA-COMP:10000"/>
        <dbReference type="Rhea" id="RHEA-COMP:10001"/>
        <dbReference type="Rhea" id="RHEA-COMP:10152"/>
        <dbReference type="Rhea" id="RHEA-COMP:10282"/>
        <dbReference type="ChEBI" id="CHEBI:17319"/>
        <dbReference type="ChEBI" id="CHEBI:33737"/>
        <dbReference type="ChEBI" id="CHEBI:33738"/>
        <dbReference type="ChEBI" id="CHEBI:57844"/>
        <dbReference type="ChEBI" id="CHEBI:57856"/>
        <dbReference type="ChEBI" id="CHEBI:59789"/>
        <dbReference type="ChEBI" id="CHEBI:74411"/>
        <dbReference type="ChEBI" id="CHEBI:74497"/>
        <dbReference type="EC" id="2.1.1.192"/>
    </reaction>
</comment>
<comment type="catalytic activity">
    <reaction evidence="1">
        <text>adenosine(37) in tRNA + 2 reduced [2Fe-2S]-[ferredoxin] + 2 S-adenosyl-L-methionine = 2-methyladenosine(37) in tRNA + 5'-deoxyadenosine + L-methionine + 2 oxidized [2Fe-2S]-[ferredoxin] + S-adenosyl-L-homocysteine</text>
        <dbReference type="Rhea" id="RHEA:43332"/>
        <dbReference type="Rhea" id="RHEA-COMP:10000"/>
        <dbReference type="Rhea" id="RHEA-COMP:10001"/>
        <dbReference type="Rhea" id="RHEA-COMP:10162"/>
        <dbReference type="Rhea" id="RHEA-COMP:10485"/>
        <dbReference type="ChEBI" id="CHEBI:17319"/>
        <dbReference type="ChEBI" id="CHEBI:33737"/>
        <dbReference type="ChEBI" id="CHEBI:33738"/>
        <dbReference type="ChEBI" id="CHEBI:57844"/>
        <dbReference type="ChEBI" id="CHEBI:57856"/>
        <dbReference type="ChEBI" id="CHEBI:59789"/>
        <dbReference type="ChEBI" id="CHEBI:74411"/>
        <dbReference type="ChEBI" id="CHEBI:74497"/>
        <dbReference type="EC" id="2.1.1.192"/>
    </reaction>
</comment>
<comment type="cofactor">
    <cofactor evidence="1">
        <name>[4Fe-4S] cluster</name>
        <dbReference type="ChEBI" id="CHEBI:49883"/>
    </cofactor>
    <text evidence="1">Binds 1 [4Fe-4S] cluster. The cluster is coordinated with 3 cysteines and an exchangeable S-adenosyl-L-methionine.</text>
</comment>
<comment type="subcellular location">
    <subcellularLocation>
        <location evidence="1">Cytoplasm</location>
    </subcellularLocation>
</comment>
<comment type="miscellaneous">
    <text evidence="1">Reaction proceeds by a ping-pong mechanism involving intermediate methylation of a conserved cysteine residue.</text>
</comment>
<comment type="similarity">
    <text evidence="1">Belongs to the radical SAM superfamily. RlmN family.</text>
</comment>
<sequence>MKASIYDFTLKELSQLLKPSFRAKQLYLWLYAKYKTSFKDMQNNFSKDFIAYLEREFALRTIEITHVRESVDGSKKYLFKSLRDNHTFEAVLLKMKDKKIDAETNAILEREKYTVCVSCQIGCQVGCSFCFTQKGGFVRNLKASEIIQQALLIKEDNNLPLEKALNIVFMGMGEPLNNLDEVCKAIEIFNTGMQISPKRITISTSGVADKIPILAGKNLGVQLAISLHAVDDKTRSSLMPLNKKYNIECVLNEVRKWPLEQRKRVMFEYLLIKDLNDSLDCAKKLLKLLNGIKSKVNLILFNPHEGSKFERPSLENARMFADFLNSKGLLCTIRESKALDIEAACGQLREKKLSQQI</sequence>
<accession>O25970</accession>
<evidence type="ECO:0000255" key="1">
    <source>
        <dbReference type="HAMAP-Rule" id="MF_01849"/>
    </source>
</evidence>
<evidence type="ECO:0000255" key="2">
    <source>
        <dbReference type="PROSITE-ProRule" id="PRU01266"/>
    </source>
</evidence>
<evidence type="ECO:0000305" key="3"/>
<name>RLMN_HELPY</name>
<dbReference type="EC" id="2.1.1.192" evidence="1"/>
<dbReference type="EMBL" id="AE000511">
    <property type="protein sequence ID" value="AAD08467.1"/>
    <property type="molecule type" value="Genomic_DNA"/>
</dbReference>
<dbReference type="EMBL" id="U26361">
    <property type="status" value="NOT_ANNOTATED_CDS"/>
    <property type="molecule type" value="Genomic_DNA"/>
</dbReference>
<dbReference type="PIR" id="D64698">
    <property type="entry name" value="D64698"/>
</dbReference>
<dbReference type="RefSeq" id="NP_208219.1">
    <property type="nucleotide sequence ID" value="NC_000915.1"/>
</dbReference>
<dbReference type="RefSeq" id="WP_000647798.1">
    <property type="nucleotide sequence ID" value="NC_018939.1"/>
</dbReference>
<dbReference type="SMR" id="O25970"/>
<dbReference type="DIP" id="DIP-3604N"/>
<dbReference type="FunCoup" id="O25970">
    <property type="interactions" value="387"/>
</dbReference>
<dbReference type="IntAct" id="O25970">
    <property type="interactions" value="1"/>
</dbReference>
<dbReference type="MINT" id="O25970"/>
<dbReference type="STRING" id="85962.HP_1428"/>
<dbReference type="PaxDb" id="85962-C694_07385"/>
<dbReference type="EnsemblBacteria" id="AAD08467">
    <property type="protein sequence ID" value="AAD08467"/>
    <property type="gene ID" value="HP_1428"/>
</dbReference>
<dbReference type="KEGG" id="heo:C694_07385"/>
<dbReference type="KEGG" id="hpy:HP_1428"/>
<dbReference type="PATRIC" id="fig|85962.47.peg.1532"/>
<dbReference type="eggNOG" id="COG0820">
    <property type="taxonomic scope" value="Bacteria"/>
</dbReference>
<dbReference type="InParanoid" id="O25970"/>
<dbReference type="OrthoDB" id="9793973at2"/>
<dbReference type="PhylomeDB" id="O25970"/>
<dbReference type="Proteomes" id="UP000000429">
    <property type="component" value="Chromosome"/>
</dbReference>
<dbReference type="GO" id="GO:0005737">
    <property type="term" value="C:cytoplasm"/>
    <property type="evidence" value="ECO:0007669"/>
    <property type="project" value="UniProtKB-SubCell"/>
</dbReference>
<dbReference type="GO" id="GO:0051539">
    <property type="term" value="F:4 iron, 4 sulfur cluster binding"/>
    <property type="evidence" value="ECO:0007669"/>
    <property type="project" value="UniProtKB-UniRule"/>
</dbReference>
<dbReference type="GO" id="GO:0046872">
    <property type="term" value="F:metal ion binding"/>
    <property type="evidence" value="ECO:0007669"/>
    <property type="project" value="UniProtKB-KW"/>
</dbReference>
<dbReference type="GO" id="GO:0070040">
    <property type="term" value="F:rRNA (adenine(2503)-C2-)-methyltransferase activity"/>
    <property type="evidence" value="ECO:0007669"/>
    <property type="project" value="UniProtKB-UniRule"/>
</dbReference>
<dbReference type="GO" id="GO:0019843">
    <property type="term" value="F:rRNA binding"/>
    <property type="evidence" value="ECO:0007669"/>
    <property type="project" value="UniProtKB-UniRule"/>
</dbReference>
<dbReference type="GO" id="GO:0002935">
    <property type="term" value="F:tRNA (adenine(37)-C2)-methyltransferase activity"/>
    <property type="evidence" value="ECO:0007669"/>
    <property type="project" value="UniProtKB-UniRule"/>
</dbReference>
<dbReference type="GO" id="GO:0000049">
    <property type="term" value="F:tRNA binding"/>
    <property type="evidence" value="ECO:0007669"/>
    <property type="project" value="UniProtKB-UniRule"/>
</dbReference>
<dbReference type="GO" id="GO:0070475">
    <property type="term" value="P:rRNA base methylation"/>
    <property type="evidence" value="ECO:0000318"/>
    <property type="project" value="GO_Central"/>
</dbReference>
<dbReference type="GO" id="GO:0030488">
    <property type="term" value="P:tRNA methylation"/>
    <property type="evidence" value="ECO:0000318"/>
    <property type="project" value="GO_Central"/>
</dbReference>
<dbReference type="CDD" id="cd01335">
    <property type="entry name" value="Radical_SAM"/>
    <property type="match status" value="1"/>
</dbReference>
<dbReference type="FunFam" id="3.20.20.70:FF:000014">
    <property type="entry name" value="Probable dual-specificity RNA methyltransferase RlmN"/>
    <property type="match status" value="1"/>
</dbReference>
<dbReference type="Gene3D" id="1.10.150.530">
    <property type="match status" value="1"/>
</dbReference>
<dbReference type="Gene3D" id="3.20.20.70">
    <property type="entry name" value="Aldolase class I"/>
    <property type="match status" value="1"/>
</dbReference>
<dbReference type="HAMAP" id="MF_01849">
    <property type="entry name" value="RNA_methyltr_RlmN"/>
    <property type="match status" value="1"/>
</dbReference>
<dbReference type="InterPro" id="IPR013785">
    <property type="entry name" value="Aldolase_TIM"/>
</dbReference>
<dbReference type="InterPro" id="IPR040072">
    <property type="entry name" value="Methyltransferase_A"/>
</dbReference>
<dbReference type="InterPro" id="IPR048641">
    <property type="entry name" value="RlmN_N"/>
</dbReference>
<dbReference type="InterPro" id="IPR027492">
    <property type="entry name" value="RNA_MTrfase_RlmN"/>
</dbReference>
<dbReference type="InterPro" id="IPR004383">
    <property type="entry name" value="rRNA_lsu_MTrfase_RlmN/Cfr"/>
</dbReference>
<dbReference type="InterPro" id="IPR007197">
    <property type="entry name" value="rSAM"/>
</dbReference>
<dbReference type="NCBIfam" id="TIGR00048">
    <property type="entry name" value="rRNA_mod_RlmN"/>
    <property type="match status" value="1"/>
</dbReference>
<dbReference type="PANTHER" id="PTHR30544">
    <property type="entry name" value="23S RRNA METHYLTRANSFERASE"/>
    <property type="match status" value="1"/>
</dbReference>
<dbReference type="PANTHER" id="PTHR30544:SF5">
    <property type="entry name" value="RADICAL SAM CORE DOMAIN-CONTAINING PROTEIN"/>
    <property type="match status" value="1"/>
</dbReference>
<dbReference type="Pfam" id="PF04055">
    <property type="entry name" value="Radical_SAM"/>
    <property type="match status" value="1"/>
</dbReference>
<dbReference type="Pfam" id="PF21016">
    <property type="entry name" value="RlmN_N"/>
    <property type="match status" value="1"/>
</dbReference>
<dbReference type="PIRSF" id="PIRSF006004">
    <property type="entry name" value="CHP00048"/>
    <property type="match status" value="1"/>
</dbReference>
<dbReference type="SFLD" id="SFLDF00275">
    <property type="entry name" value="adenosine_C2_methyltransferase"/>
    <property type="match status" value="1"/>
</dbReference>
<dbReference type="SFLD" id="SFLDS00029">
    <property type="entry name" value="Radical_SAM"/>
    <property type="match status" value="1"/>
</dbReference>
<dbReference type="SUPFAM" id="SSF102114">
    <property type="entry name" value="Radical SAM enzymes"/>
    <property type="match status" value="1"/>
</dbReference>
<dbReference type="PROSITE" id="PS51918">
    <property type="entry name" value="RADICAL_SAM"/>
    <property type="match status" value="1"/>
</dbReference>
<keyword id="KW-0004">4Fe-4S</keyword>
<keyword id="KW-0963">Cytoplasm</keyword>
<keyword id="KW-1015">Disulfide bond</keyword>
<keyword id="KW-0408">Iron</keyword>
<keyword id="KW-0411">Iron-sulfur</keyword>
<keyword id="KW-0479">Metal-binding</keyword>
<keyword id="KW-0489">Methyltransferase</keyword>
<keyword id="KW-1185">Reference proteome</keyword>
<keyword id="KW-0698">rRNA processing</keyword>
<keyword id="KW-0949">S-adenosyl-L-methionine</keyword>
<keyword id="KW-0808">Transferase</keyword>
<keyword id="KW-0819">tRNA processing</keyword>
<feature type="chain" id="PRO_0000171925" description="Dual-specificity RNA methyltransferase RlmN">
    <location>
        <begin position="1"/>
        <end position="357"/>
    </location>
</feature>
<feature type="domain" description="Radical SAM core" evidence="2">
    <location>
        <begin position="109"/>
        <end position="340"/>
    </location>
</feature>
<feature type="active site" description="Proton acceptor" evidence="1">
    <location>
        <position position="89"/>
    </location>
</feature>
<feature type="active site" description="S-methylcysteine intermediate" evidence="1">
    <location>
        <position position="345"/>
    </location>
</feature>
<feature type="binding site" evidence="1">
    <location>
        <position position="123"/>
    </location>
    <ligand>
        <name>[4Fe-4S] cluster</name>
        <dbReference type="ChEBI" id="CHEBI:49883"/>
        <note>4Fe-4S-S-AdoMet</note>
    </ligand>
</feature>
<feature type="binding site" evidence="1">
    <location>
        <position position="127"/>
    </location>
    <ligand>
        <name>[4Fe-4S] cluster</name>
        <dbReference type="ChEBI" id="CHEBI:49883"/>
        <note>4Fe-4S-S-AdoMet</note>
    </ligand>
</feature>
<feature type="binding site" evidence="1">
    <location>
        <position position="130"/>
    </location>
    <ligand>
        <name>[4Fe-4S] cluster</name>
        <dbReference type="ChEBI" id="CHEBI:49883"/>
        <note>4Fe-4S-S-AdoMet</note>
    </ligand>
</feature>
<feature type="binding site" evidence="1">
    <location>
        <begin position="173"/>
        <end position="174"/>
    </location>
    <ligand>
        <name>S-adenosyl-L-methionine</name>
        <dbReference type="ChEBI" id="CHEBI:59789"/>
    </ligand>
</feature>
<feature type="binding site" evidence="1">
    <location>
        <position position="203"/>
    </location>
    <ligand>
        <name>S-adenosyl-L-methionine</name>
        <dbReference type="ChEBI" id="CHEBI:59789"/>
    </ligand>
</feature>
<feature type="binding site" evidence="1">
    <location>
        <begin position="226"/>
        <end position="228"/>
    </location>
    <ligand>
        <name>S-adenosyl-L-methionine</name>
        <dbReference type="ChEBI" id="CHEBI:59789"/>
    </ligand>
</feature>
<feature type="binding site" evidence="1">
    <location>
        <position position="302"/>
    </location>
    <ligand>
        <name>S-adenosyl-L-methionine</name>
        <dbReference type="ChEBI" id="CHEBI:59789"/>
    </ligand>
</feature>
<feature type="disulfide bond" description="(transient)" evidence="1">
    <location>
        <begin position="116"/>
        <end position="345"/>
    </location>
</feature>
<feature type="sequence conflict" description="In Ref. 2; U26361." evidence="3" ref="2">
    <original>N</original>
    <variation>S</variation>
    <location>
        <position position="316"/>
    </location>
</feature>
<reference key="1">
    <citation type="journal article" date="1997" name="Nature">
        <title>The complete genome sequence of the gastric pathogen Helicobacter pylori.</title>
        <authorList>
            <person name="Tomb J.-F."/>
            <person name="White O."/>
            <person name="Kerlavage A.R."/>
            <person name="Clayton R.A."/>
            <person name="Sutton G.G."/>
            <person name="Fleischmann R.D."/>
            <person name="Ketchum K.A."/>
            <person name="Klenk H.-P."/>
            <person name="Gill S.R."/>
            <person name="Dougherty B.A."/>
            <person name="Nelson K.E."/>
            <person name="Quackenbush J."/>
            <person name="Zhou L."/>
            <person name="Kirkness E.F."/>
            <person name="Peterson S.N."/>
            <person name="Loftus B.J."/>
            <person name="Richardson D.L."/>
            <person name="Dodson R.J."/>
            <person name="Khalak H.G."/>
            <person name="Glodek A."/>
            <person name="McKenney K."/>
            <person name="FitzGerald L.M."/>
            <person name="Lee N."/>
            <person name="Adams M.D."/>
            <person name="Hickey E.K."/>
            <person name="Berg D.E."/>
            <person name="Gocayne J.D."/>
            <person name="Utterback T.R."/>
            <person name="Peterson J.D."/>
            <person name="Kelley J.M."/>
            <person name="Cotton M.D."/>
            <person name="Weidman J.F."/>
            <person name="Fujii C."/>
            <person name="Bowman C."/>
            <person name="Watthey L."/>
            <person name="Wallin E."/>
            <person name="Hayes W.S."/>
            <person name="Borodovsky M."/>
            <person name="Karp P.D."/>
            <person name="Smith H.O."/>
            <person name="Fraser C.M."/>
            <person name="Venter J.C."/>
        </authorList>
    </citation>
    <scope>NUCLEOTIDE SEQUENCE [LARGE SCALE GENOMIC DNA]</scope>
    <source>
        <strain>ATCC 700392 / 26695</strain>
    </source>
</reference>
<reference key="2">
    <citation type="journal article" date="1995" name="Infect. Immun.">
        <title>Protein Hpn: cloning and characterization of a histidine-rich metal-binding polypeptide in Helicobacter pylori and Helicobacter mustelae.</title>
        <authorList>
            <person name="Gilbert J.V."/>
            <person name="Ramakrishna J."/>
            <person name="Sunderman F.W. Jr."/>
            <person name="Wright A."/>
            <person name="Plaut A.G."/>
        </authorList>
    </citation>
    <scope>NUCLEOTIDE SEQUENCE [GENOMIC DNA] OF 274-357</scope>
    <source>
        <strain>LEU</strain>
    </source>
</reference>
<gene>
    <name evidence="1" type="primary">rlmN</name>
    <name type="ordered locus">HP_1428</name>
</gene>
<proteinExistence type="inferred from homology"/>
<organism>
    <name type="scientific">Helicobacter pylori (strain ATCC 700392 / 26695)</name>
    <name type="common">Campylobacter pylori</name>
    <dbReference type="NCBI Taxonomy" id="85962"/>
    <lineage>
        <taxon>Bacteria</taxon>
        <taxon>Pseudomonadati</taxon>
        <taxon>Campylobacterota</taxon>
        <taxon>Epsilonproteobacteria</taxon>
        <taxon>Campylobacterales</taxon>
        <taxon>Helicobacteraceae</taxon>
        <taxon>Helicobacter</taxon>
    </lineage>
</organism>